<sequence length="661" mass="75393">MGTLFRRNVQNQKSDSDENNKGGSVHNKRESRNHIHHQQGLGHKRRRGISGSAKRNERGKDFDRKRDGNGRKRWRDSRRLIFILGAFLGVLLPFSFGAYHVHNSDSDLFDNFVNFDSLKVYLDDWKDVLPQGISSFIDDIQAGNYSTSSLDDLSENFAVGKQLLRDYNIEAKHPVVMVPGVISTGIESWGVIGDDECDSSAHFRKRLWGSFYMLRTMVMDKVCWLKHVMLDPETGLDPPNFTLRAAQGFESTDYFIAGYWIWNKVFQNLGVIGYEPNKMTSAAYDWRLAYLDLERRDRYFTKLKEQIELFHQLSGEKVCLIGHSMGSQIIFYFMKWVEAEGPLYGNGGRGWVNEHIDSFINAAGTLLGAPKAVPALISGEMKDTIQLNTLAMYGLEKFFSRIERVKMLQTWGGIPSMLPKGEEVIWGDMKSSSEDALNNNTDTYGNFIRFERNTSDAFNKNLTMKDAINMTLSISPEWLQRRVHEQYSFGYSKNEEELRKNELHHKHWSNPMEVPLPEAPHMKIYCIYGVNNPTERAYVYKEEDDSSALNLTIDYESKQPVFLTEGDGTVPLVAHSMCHKWAQGASPYNPAGINVTIVEMKHQPDRFDIRGGAKSAEHVDILGSAELNDYILKIASGNGDLVEPRQLSNLSQWVSQMPFPM</sequence>
<gene>
    <name evidence="14" type="primary">LRO1</name>
    <name type="ordered locus">YNR008W</name>
    <name type="ORF">N2042</name>
</gene>
<keyword id="KW-0012">Acyltransferase</keyword>
<keyword id="KW-0256">Endoplasmic reticulum</keyword>
<keyword id="KW-0325">Glycoprotein</keyword>
<keyword id="KW-0472">Membrane</keyword>
<keyword id="KW-0539">Nucleus</keyword>
<keyword id="KW-1185">Reference proteome</keyword>
<keyword id="KW-0735">Signal-anchor</keyword>
<keyword id="KW-0808">Transferase</keyword>
<keyword id="KW-0812">Transmembrane</keyword>
<keyword id="KW-1133">Transmembrane helix</keyword>
<feature type="chain" id="PRO_0000058268" description="Phospholipid:diacylglycerol acyltransferase">
    <location>
        <begin position="1"/>
        <end position="661"/>
    </location>
</feature>
<feature type="topological domain" description="Cytoplasmic" evidence="18">
    <location>
        <begin position="1"/>
        <end position="80"/>
    </location>
</feature>
<feature type="transmembrane region" description="Helical" evidence="2">
    <location>
        <begin position="81"/>
        <end position="101"/>
    </location>
</feature>
<feature type="topological domain" description="Lumenal" evidence="18">
    <location>
        <begin position="102"/>
        <end position="661"/>
    </location>
</feature>
<feature type="region of interest" description="Disordered" evidence="4">
    <location>
        <begin position="1"/>
        <end position="71"/>
    </location>
</feature>
<feature type="short sequence motif" description="Bipartite nuclear localization signal" evidence="3">
    <location>
        <begin position="43"/>
        <end position="50"/>
    </location>
</feature>
<feature type="short sequence motif" description="Bipartite nuclear localization signal" evidence="3">
    <location>
        <begin position="64"/>
        <end position="71"/>
    </location>
</feature>
<feature type="short sequence motif" description="GHSXG lipase motif" evidence="19">
    <location>
        <begin position="322"/>
        <end position="326"/>
    </location>
</feature>
<feature type="compositionally biased region" description="Basic residues" evidence="4">
    <location>
        <begin position="34"/>
        <end position="48"/>
    </location>
</feature>
<feature type="compositionally biased region" description="Basic and acidic residues" evidence="4">
    <location>
        <begin position="54"/>
        <end position="70"/>
    </location>
</feature>
<feature type="active site" description="Acyl-ester intermediate" evidence="1">
    <location>
        <position position="324"/>
    </location>
</feature>
<feature type="active site" description="Charge relay system" evidence="1">
    <location>
        <position position="567"/>
    </location>
</feature>
<feature type="active site" description="Charge relay system" evidence="1 20">
    <location>
        <position position="618"/>
    </location>
</feature>
<feature type="binding site" evidence="1">
    <location>
        <position position="162"/>
    </location>
    <ligand>
        <name>substrate</name>
    </ligand>
</feature>
<feature type="binding site" evidence="1">
    <location>
        <position position="325"/>
    </location>
    <ligand>
        <name>substrate</name>
    </ligand>
</feature>
<feature type="glycosylation site" description="N-linked (GlcNAc...) asparagine" evidence="11">
    <location>
        <position position="453"/>
    </location>
</feature>
<feature type="glycosylation site" description="N-linked (GlcNAc...) asparagine" evidence="11">
    <location>
        <position position="461"/>
    </location>
</feature>
<feature type="glycosylation site" description="N-linked (GlcNAc...) asparagine" evidence="11">
    <location>
        <position position="469"/>
    </location>
</feature>
<feature type="glycosylation site" description="N-linked (GlcNAc...) asparagine" evidence="11">
    <location>
        <position position="594"/>
    </location>
</feature>
<feature type="mutagenesis site" description="Abolishes catalytic activity." evidence="12">
    <original>S</original>
    <variation>A</variation>
    <location>
        <position position="324"/>
    </location>
</feature>
<feature type="mutagenesis site" description="Abolishes catalytic activity. Fails to localize to lipid droplet biogenesis sites on the ER." evidence="13">
    <original>H</original>
    <variation>A</variation>
    <location>
        <position position="618"/>
    </location>
</feature>
<protein>
    <recommendedName>
        <fullName evidence="15">Phospholipid:diacylglycerol acyltransferase</fullName>
        <shortName>PDAT</shortName>
        <ecNumber evidence="6 7 11">2.3.1.158</ecNumber>
    </recommendedName>
    <alternativeName>
        <fullName evidence="14">LCAT-related open reading frame 1</fullName>
    </alternativeName>
    <alternativeName>
        <fullName evidence="14">Lecithin cholesterol acyl transferase-related open reading frame 1</fullName>
    </alternativeName>
    <alternativeName>
        <fullName>Triacylglycerol synthase</fullName>
        <shortName>TAG synthase</shortName>
    </alternativeName>
</protein>
<organism>
    <name type="scientific">Saccharomyces cerevisiae (strain ATCC 204508 / S288c)</name>
    <name type="common">Baker's yeast</name>
    <dbReference type="NCBI Taxonomy" id="559292"/>
    <lineage>
        <taxon>Eukaryota</taxon>
        <taxon>Fungi</taxon>
        <taxon>Dikarya</taxon>
        <taxon>Ascomycota</taxon>
        <taxon>Saccharomycotina</taxon>
        <taxon>Saccharomycetes</taxon>
        <taxon>Saccharomycetales</taxon>
        <taxon>Saccharomycetaceae</taxon>
        <taxon>Saccharomyces</taxon>
    </lineage>
</organism>
<reference key="1">
    <citation type="journal article" date="1994" name="Yeast">
        <title>Twelve open reading frames revealed in the 23.6 kb segment flanking the centromere on the Saccharomyces cerevisiae chromosome XIV right arm.</title>
        <authorList>
            <person name="Verhasselt P."/>
            <person name="Aert R."/>
            <person name="Voet M."/>
            <person name="Volckaert G."/>
        </authorList>
    </citation>
    <scope>NUCLEOTIDE SEQUENCE [GENOMIC DNA]</scope>
    <source>
        <strain>ATCC 96604 / S288c / FY1679</strain>
    </source>
</reference>
<reference key="2">
    <citation type="journal article" date="1997" name="Nature">
        <title>The nucleotide sequence of Saccharomyces cerevisiae chromosome XIV and its evolutionary implications.</title>
        <authorList>
            <person name="Philippsen P."/>
            <person name="Kleine K."/>
            <person name="Poehlmann R."/>
            <person name="Duesterhoeft A."/>
            <person name="Hamberg K."/>
            <person name="Hegemann J.H."/>
            <person name="Obermaier B."/>
            <person name="Urrestarazu L.A."/>
            <person name="Aert R."/>
            <person name="Albermann K."/>
            <person name="Altmann R."/>
            <person name="Andre B."/>
            <person name="Baladron V."/>
            <person name="Ballesta J.P.G."/>
            <person name="Becam A.-M."/>
            <person name="Beinhauer J.D."/>
            <person name="Boskovic J."/>
            <person name="Buitrago M.J."/>
            <person name="Bussereau F."/>
            <person name="Coster F."/>
            <person name="Crouzet M."/>
            <person name="D'Angelo M."/>
            <person name="Dal Pero F."/>
            <person name="De Antoni A."/>
            <person name="del Rey F."/>
            <person name="Doignon F."/>
            <person name="Domdey H."/>
            <person name="Dubois E."/>
            <person name="Fiedler T.A."/>
            <person name="Fleig U."/>
            <person name="Floeth M."/>
            <person name="Fritz C."/>
            <person name="Gaillardin C."/>
            <person name="Garcia-Cantalejo J.M."/>
            <person name="Glansdorff N."/>
            <person name="Goffeau A."/>
            <person name="Gueldener U."/>
            <person name="Herbert C.J."/>
            <person name="Heumann K."/>
            <person name="Heuss-Neitzel D."/>
            <person name="Hilbert H."/>
            <person name="Hinni K."/>
            <person name="Iraqui Houssaini I."/>
            <person name="Jacquet M."/>
            <person name="Jimenez A."/>
            <person name="Jonniaux J.-L."/>
            <person name="Karpfinger-Hartl L."/>
            <person name="Lanfranchi G."/>
            <person name="Lepingle A."/>
            <person name="Levesque H."/>
            <person name="Lyck R."/>
            <person name="Maftahi M."/>
            <person name="Mallet L."/>
            <person name="Maurer C.T.C."/>
            <person name="Messenguy F."/>
            <person name="Mewes H.-W."/>
            <person name="Moestl D."/>
            <person name="Nasr F."/>
            <person name="Nicaud J.-M."/>
            <person name="Niedenthal R.K."/>
            <person name="Pandolfo D."/>
            <person name="Pierard A."/>
            <person name="Piravandi E."/>
            <person name="Planta R.J."/>
            <person name="Pohl T.M."/>
            <person name="Purnelle B."/>
            <person name="Rebischung C."/>
            <person name="Remacha M.A."/>
            <person name="Revuelta J.L."/>
            <person name="Rinke M."/>
            <person name="Saiz J.E."/>
            <person name="Sartorello F."/>
            <person name="Scherens B."/>
            <person name="Sen-Gupta M."/>
            <person name="Soler-Mira A."/>
            <person name="Urbanus J.H.M."/>
            <person name="Valle G."/>
            <person name="Van Dyck L."/>
            <person name="Verhasselt P."/>
            <person name="Vierendeels F."/>
            <person name="Vissers S."/>
            <person name="Voet M."/>
            <person name="Volckaert G."/>
            <person name="Wach A."/>
            <person name="Wambutt R."/>
            <person name="Wedler H."/>
            <person name="Zollner A."/>
            <person name="Hani J."/>
        </authorList>
    </citation>
    <scope>NUCLEOTIDE SEQUENCE [LARGE SCALE GENOMIC DNA]</scope>
    <source>
        <strain>ATCC 204508 / S288c</strain>
    </source>
</reference>
<reference key="3">
    <citation type="journal article" date="2014" name="G3 (Bethesda)">
        <title>The reference genome sequence of Saccharomyces cerevisiae: Then and now.</title>
        <authorList>
            <person name="Engel S.R."/>
            <person name="Dietrich F.S."/>
            <person name="Fisk D.G."/>
            <person name="Binkley G."/>
            <person name="Balakrishnan R."/>
            <person name="Costanzo M.C."/>
            <person name="Dwight S.S."/>
            <person name="Hitz B.C."/>
            <person name="Karra K."/>
            <person name="Nash R.S."/>
            <person name="Weng S."/>
            <person name="Wong E.D."/>
            <person name="Lloyd P."/>
            <person name="Skrzypek M.S."/>
            <person name="Miyasato S.R."/>
            <person name="Simison M."/>
            <person name="Cherry J.M."/>
        </authorList>
    </citation>
    <scope>GENOME REANNOTATION</scope>
    <source>
        <strain>ATCC 204508 / S288c</strain>
    </source>
</reference>
<reference key="4">
    <citation type="journal article" date="2000" name="J. Biol. Chem.">
        <title>A lecithin cholesterol acyltransferase-like gene mediates diacylglycerol esterification in yeast.</title>
        <authorList>
            <person name="Oelkers P."/>
            <person name="Tinkelenberg A."/>
            <person name="Erdeniz N."/>
            <person name="Cromley D."/>
            <person name="Billheimer J.T."/>
            <person name="Sturley S.L."/>
        </authorList>
    </citation>
    <scope>FUNCTION</scope>
</reference>
<reference key="5">
    <citation type="journal article" date="2000" name="Proc. Natl. Acad. Sci. U.S.A.">
        <title>Phospholipid:diacylglycerol acyltransferase: an enzyme that catalyzes the acyl-CoA-independent formation of triacylglycerol in yeast and plants.</title>
        <authorList>
            <person name="Dahlqvist A."/>
            <person name="Stahl U."/>
            <person name="Lenman M."/>
            <person name="Banas A."/>
            <person name="Lee M."/>
            <person name="Sandager L."/>
            <person name="Ronne H."/>
            <person name="Stymne S."/>
        </authorList>
    </citation>
    <scope>FUNCTION</scope>
    <scope>CATALYTIC ACTIVITY</scope>
</reference>
<reference key="6">
    <citation type="journal article" date="2007" name="Biochim. Biophys. Acta">
        <title>Saccharomyces cerevisiae phospholipid:diacylglycerol acyl transferase (PDAT) devoid of its membrane anchor region is a soluble and active enzyme retaining its substrate specificities.</title>
        <authorList>
            <person name="Ghosal A."/>
            <person name="Banas A."/>
            <person name="Staahl U."/>
            <person name="Dahlqvist A."/>
            <person name="Lindqvist Y."/>
            <person name="Stymne S."/>
        </authorList>
    </citation>
    <scope>CATALYTIC ACTIVITY</scope>
    <scope>GLYCOSYLATION</scope>
</reference>
<reference key="7">
    <citation type="journal article" date="2011" name="Commun. Integr. Biol.">
        <title>The topology of the triacylglycerol synthesizing enzyme Lro1 indicates that neutral lipids can be produced within the luminal compartment of the endoplasmatic reticulum: Implications for the biogenesis of lipid droplets.</title>
        <authorList>
            <person name="Choudhary V."/>
            <person name="Jacquier N."/>
            <person name="Schneiter R."/>
        </authorList>
    </citation>
    <scope>TOPOLOGY</scope>
    <scope>SUBCELLULAR LOCATION</scope>
</reference>
<reference key="8">
    <citation type="journal article" date="2012" name="Biochem. J.">
        <title>A novel pathway of ceramide metabolism in Saccharomyces cerevisiae.</title>
        <authorList>
            <person name="Voynova N.S."/>
            <person name="Vionnet C."/>
            <person name="Ejsing C.S."/>
            <person name="Conzelmann A."/>
        </authorList>
    </citation>
    <scope>FUNCTION</scope>
</reference>
<reference key="9">
    <citation type="journal article" date="2012" name="J. Cell Sci.">
        <title>The ubiquitin-like (UBX)-domain-containing protein Ubx2/Ubxd8 regulates lipid droplet homeostasis.</title>
        <authorList>
            <person name="Wang C.W."/>
            <person name="Lee S.C."/>
        </authorList>
    </citation>
    <scope>SUBCELLULAR LOCATION</scope>
</reference>
<reference key="10">
    <citation type="journal article" date="2019" name="Appl. Biochem. Biotechnol.">
        <title>Expanding of phospholipid:diacylglycerol acyltransferase (PDAT) from Saccharomyces cerevisiae as multifunctional biocatalyst with broad acyl donor/acceptor selectivity.</title>
        <authorList>
            <person name="Feng Y."/>
            <person name="Zhang Y."/>
            <person name="Ding W."/>
            <person name="Wu P."/>
            <person name="Cao X."/>
            <person name="Xue S."/>
        </authorList>
    </citation>
    <scope>FUNCTION</scope>
    <scope>CATALYTIC ACTIVITY</scope>
    <scope>SUBSTRATE SPECIFICITY</scope>
    <scope>GLYCOSYLATION AT ASN-453; ASN-461; ASN-469 AND ASN-594</scope>
</reference>
<reference key="11">
    <citation type="journal article" date="2019" name="Dev. Cell">
        <title>Compartmentalized synthesis of triacylglycerol at the inner nuclear membrane regulates nuclear organization.</title>
        <authorList>
            <person name="Barbosa A.D."/>
            <person name="Lim K."/>
            <person name="Mari M."/>
            <person name="Edgar J.R."/>
            <person name="Gal L."/>
            <person name="Sterk P."/>
            <person name="Jenkins B.J."/>
            <person name="Koulman A."/>
            <person name="Savage D.B."/>
            <person name="Schuldiner M."/>
            <person name="Reggiori F."/>
            <person name="Wigge P.A."/>
            <person name="Siniossoglou S."/>
        </authorList>
    </citation>
    <scope>FUNCTION</scope>
    <scope>CATALYTIC ACTIVITY</scope>
    <scope>MUTAGENESIS OF SER-324</scope>
</reference>
<reference key="12">
    <citation type="journal article" date="2020" name="J. Cell Biol.">
        <title>Seipin and Nem1 establish discrete ER subdomains to initiate yeast lipid droplet biogenesis.</title>
        <authorList>
            <person name="Choudhary V."/>
            <person name="El Atab O."/>
            <person name="Mizzon G."/>
            <person name="Prinz W.A."/>
            <person name="Schneiter R."/>
        </authorList>
    </citation>
    <scope>FUNCTION</scope>
    <scope>SUBCELLULAR LOCATION</scope>
    <scope>MUTAGENESIS OF HIS-618</scope>
</reference>
<comment type="function">
    <text evidence="5 6 10 11 12 13">Catalyzes triacylglycerol (TAG) formation by an acyl-CoA independent pathway. The enzyme specifically transfers acyl groups from the sn-2 position of a phospholipid to diacylglycerol (DAG), thus forming an sn-1-lysophospholipid (PubMed:10747858, PubMed:10829075, PubMed:32349126). The preferred acyl donors are phosphatidylethanolamine (PE) and phosphatidylcholine (PC). Also capable of using broad acyl donors such as phosphatidic acid (PA), phosphatidylserine (PS), phosphatidylglycerol (PG) and phosphatidylinositol (PI), as well as monogalactosyldiacylglycerol (MGDG), digalactosyldiacylglycerol (DGDG), and acyl-CoA, and it is more likely to use unsaturated acyl donors. As acyl acceptors, it prefers 1,2- over 1,3-diacylglycerol (DAG). Additionally, has esterification activity that can utilize methanol as acyl acceptor to generate fatty acid methyl esters (FAME) (PubMed:30706417). Can also utilize ceramide instead of DAG, acylating the ceramides by attaching a fatty acid to the hydroxy group on the first carbon atom of the long-chain base to produce 1-O-acylceramides (PubMed:22738231). Involved in lipid particle synthesis from the endoplasmic reticulum, promoting localized TAG production at discrete ER subdomains (PubMed:32349126). Relocates from the endoplasmic reticulum to a subdomain of the inner nuclear membrane upon nutrient starvation, where it provides a site of TAG synthesis, which is coupled with nuclear membrane remodeling (PubMed:31422915).</text>
</comment>
<comment type="catalytic activity">
    <reaction evidence="6 7 11">
        <text>a glycerophospholipid + a 1,2-diacyl-sn-glycerol = a monoacylglycerophospholipid + a triacyl-sn-glycerol</text>
        <dbReference type="Rhea" id="RHEA:14057"/>
        <dbReference type="ChEBI" id="CHEBI:17815"/>
        <dbReference type="ChEBI" id="CHEBI:64615"/>
        <dbReference type="ChEBI" id="CHEBI:136912"/>
        <dbReference type="ChEBI" id="CHEBI:136913"/>
        <dbReference type="EC" id="2.3.1.158"/>
    </reaction>
</comment>
<comment type="catalytic activity">
    <reaction evidence="7">
        <text>a 1-acyl-sn-glycerol + a 1,2-diacyl-sn-glycero-3-phosphocholine = a 1-acyl-sn-glycero-3-phosphocholine + a 1,2-diacyl-sn-glycerol</text>
        <dbReference type="Rhea" id="RHEA:32859"/>
        <dbReference type="ChEBI" id="CHEBI:17815"/>
        <dbReference type="ChEBI" id="CHEBI:57643"/>
        <dbReference type="ChEBI" id="CHEBI:58168"/>
        <dbReference type="ChEBI" id="CHEBI:64683"/>
    </reaction>
    <physiologicalReaction direction="left-to-right" evidence="17">
        <dbReference type="Rhea" id="RHEA:32860"/>
    </physiologicalReaction>
</comment>
<comment type="catalytic activity">
    <reaction evidence="6 7">
        <text>1,2-di-(9Z-octadecenoyl)-sn-glycero-3-phosphoethanolamine + 1,2-di-(9Z-octadecenoyl)-sn-glycerol = 1-(9Z-octadecenoyl)-sn-glycero-3-phosphoethanolamine + 1,2,3-tri-(9Z-octadecenoyl)-glycerol</text>
        <dbReference type="Rhea" id="RHEA:44232"/>
        <dbReference type="ChEBI" id="CHEBI:52333"/>
        <dbReference type="ChEBI" id="CHEBI:53753"/>
        <dbReference type="ChEBI" id="CHEBI:74971"/>
        <dbReference type="ChEBI" id="CHEBI:74986"/>
    </reaction>
    <physiologicalReaction direction="left-to-right" evidence="16 17">
        <dbReference type="Rhea" id="RHEA:44233"/>
    </physiologicalReaction>
</comment>
<comment type="catalytic activity">
    <reaction evidence="6 7">
        <text>1,2-di-(9Z-octadecenoyl)-sn-glycerol + 1,2-di-(9Z-octadecenoyl)-sn-glycero-3-phosphocholine = 1,2,3-tri-(9Z-octadecenoyl)-glycerol + 1-(9Z-octadecenoyl)-sn-glycero-3-phosphocholine</text>
        <dbReference type="Rhea" id="RHEA:44236"/>
        <dbReference type="ChEBI" id="CHEBI:28610"/>
        <dbReference type="ChEBI" id="CHEBI:52333"/>
        <dbReference type="ChEBI" id="CHEBI:53753"/>
        <dbReference type="ChEBI" id="CHEBI:74669"/>
    </reaction>
    <physiologicalReaction direction="left-to-right" evidence="16 17">
        <dbReference type="Rhea" id="RHEA:44237"/>
    </physiologicalReaction>
</comment>
<comment type="catalytic activity">
    <reaction evidence="7">
        <text>1-(9Z-octadecenoyl)-sn-glycerol + 1,2-di-(9Z-octadecenoyl)-sn-glycero-3-phosphocholine = di-(9Z)-octadecenoylglycerol + 1-(9Z-octadecenoyl)-sn-glycero-3-phosphocholine</text>
        <dbReference type="Rhea" id="RHEA:44240"/>
        <dbReference type="ChEBI" id="CHEBI:28610"/>
        <dbReference type="ChEBI" id="CHEBI:74669"/>
        <dbReference type="ChEBI" id="CHEBI:75757"/>
        <dbReference type="ChEBI" id="CHEBI:75945"/>
    </reaction>
    <physiologicalReaction direction="left-to-right" evidence="17">
        <dbReference type="Rhea" id="RHEA:44241"/>
    </physiologicalReaction>
</comment>
<comment type="catalytic activity">
    <reaction evidence="7">
        <text>2-(9Z-octadecenoyl)-glycerol + 1,2-di-(9Z-octadecenoyl)-sn-glycero-3-phosphocholine = 1,2-di-(9Z-octadecenoyl)-glycerol + 1-(9Z-octadecenoyl)-sn-glycero-3-phosphocholine</text>
        <dbReference type="Rhea" id="RHEA:44244"/>
        <dbReference type="ChEBI" id="CHEBI:28610"/>
        <dbReference type="ChEBI" id="CHEBI:52323"/>
        <dbReference type="ChEBI" id="CHEBI:73990"/>
        <dbReference type="ChEBI" id="CHEBI:74669"/>
    </reaction>
    <physiologicalReaction direction="left-to-right" evidence="17">
        <dbReference type="Rhea" id="RHEA:44245"/>
    </physiologicalReaction>
</comment>
<comment type="catalytic activity">
    <reaction evidence="7">
        <text>1-(9Z-octadecenoyl)-2-hexadecanoyl-sn-glycero-3-phosphoethanolamine + 1,2-di-(9Z-octadecenoyl)-sn-glycerol = 1,2-di-(9Z)-octadecenoyl-3-hexadecanoyl-sn-glycerol + 1-(9Z-octadecenoyl)-sn-glycero-3-phosphoethanolamine</text>
        <dbReference type="Rhea" id="RHEA:44248"/>
        <dbReference type="ChEBI" id="CHEBI:52333"/>
        <dbReference type="ChEBI" id="CHEBI:74971"/>
        <dbReference type="ChEBI" id="CHEBI:75583"/>
        <dbReference type="ChEBI" id="CHEBI:78813"/>
    </reaction>
    <physiologicalReaction direction="left-to-right" evidence="17">
        <dbReference type="Rhea" id="RHEA:44249"/>
    </physiologicalReaction>
</comment>
<comment type="catalytic activity">
    <reaction evidence="7">
        <text>1-(9Z-octadecenoyl)-2-octadecanoyl-sn-glycero-3-phosphoethanolamine + 1,2-di-(9Z-octadecenoyl)-sn-glycerol = 1,2-di-(9Z)-octadecenoyl-3-octadecanoyl-sn-glycerol + 1-(9Z-octadecenoyl)-sn-glycero-3-phosphoethanolamine</text>
        <dbReference type="Rhea" id="RHEA:44252"/>
        <dbReference type="ChEBI" id="CHEBI:52333"/>
        <dbReference type="ChEBI" id="CHEBI:74971"/>
        <dbReference type="ChEBI" id="CHEBI:77686"/>
        <dbReference type="ChEBI" id="CHEBI:84234"/>
    </reaction>
    <physiologicalReaction direction="left-to-right" evidence="17">
        <dbReference type="Rhea" id="RHEA:44253"/>
    </physiologicalReaction>
</comment>
<comment type="catalytic activity">
    <reaction evidence="7">
        <text>1-(9Z)-octadecenoyl-2-(9Z,12Z)-octadecadienoyl-sn-glycero-3-phosphoethanolamine + 1,2-di-(9Z-octadecenoyl)-sn-glycerol = 1,2-di-(9Z)-octadecenoyl-3-(9Z,12Z)-octadecadienoyl-sn-glycerol + 1-(9Z-octadecenoyl)-sn-glycero-3-phosphoethanolamine</text>
        <dbReference type="Rhea" id="RHEA:44256"/>
        <dbReference type="ChEBI" id="CHEBI:52333"/>
        <dbReference type="ChEBI" id="CHEBI:74971"/>
        <dbReference type="ChEBI" id="CHEBI:74977"/>
        <dbReference type="ChEBI" id="CHEBI:77683"/>
    </reaction>
    <physiologicalReaction direction="left-to-right" evidence="17">
        <dbReference type="Rhea" id="RHEA:44257"/>
    </physiologicalReaction>
</comment>
<comment type="subcellular location">
    <subcellularLocation>
        <location evidence="8 9 12 13">Endoplasmic reticulum membrane</location>
        <topology evidence="8">Single-pass type II membrane protein</topology>
    </subcellularLocation>
    <subcellularLocation>
        <location evidence="12">Nucleus inner membrane</location>
        <topology evidence="2">Single-pass type II membrane protein</topology>
    </subcellularLocation>
    <text evidence="9 12 13">Localizes to sites of lipid droplet biogenesis in the endoplasmic reticulum (PubMed:22454508, PubMed:32349126). Relocates from the endoplasmic reticulum to a subdomain of the inner nuclear membrane that associates with the nucleolus upon nutrient starvation (PubMed:31422915).</text>
</comment>
<comment type="similarity">
    <text evidence="15">Belongs to the AB hydrolase superfamily. Lipase family.</text>
</comment>
<name>PDAT_YEAST</name>
<accession>P40345</accession>
<accession>D6W1I3</accession>
<evidence type="ECO:0000250" key="1">
    <source>
        <dbReference type="UniProtKB" id="Q8NCC3"/>
    </source>
</evidence>
<evidence type="ECO:0000255" key="2"/>
<evidence type="ECO:0000255" key="3">
    <source>
        <dbReference type="PROSITE-ProRule" id="PRU00768"/>
    </source>
</evidence>
<evidence type="ECO:0000256" key="4">
    <source>
        <dbReference type="SAM" id="MobiDB-lite"/>
    </source>
</evidence>
<evidence type="ECO:0000269" key="5">
    <source>
    </source>
</evidence>
<evidence type="ECO:0000269" key="6">
    <source>
    </source>
</evidence>
<evidence type="ECO:0000269" key="7">
    <source>
    </source>
</evidence>
<evidence type="ECO:0000269" key="8">
    <source>
    </source>
</evidence>
<evidence type="ECO:0000269" key="9">
    <source>
    </source>
</evidence>
<evidence type="ECO:0000269" key="10">
    <source>
    </source>
</evidence>
<evidence type="ECO:0000269" key="11">
    <source>
    </source>
</evidence>
<evidence type="ECO:0000269" key="12">
    <source>
    </source>
</evidence>
<evidence type="ECO:0000269" key="13">
    <source>
    </source>
</evidence>
<evidence type="ECO:0000303" key="14">
    <source>
    </source>
</evidence>
<evidence type="ECO:0000305" key="15"/>
<evidence type="ECO:0000305" key="16">
    <source>
    </source>
</evidence>
<evidence type="ECO:0000305" key="17">
    <source>
    </source>
</evidence>
<evidence type="ECO:0000305" key="18">
    <source>
    </source>
</evidence>
<evidence type="ECO:0000305" key="19">
    <source>
    </source>
</evidence>
<evidence type="ECO:0000305" key="20">
    <source>
    </source>
</evidence>
<dbReference type="EC" id="2.3.1.158" evidence="6 7 11"/>
<dbReference type="EMBL" id="X77395">
    <property type="protein sequence ID" value="CAA54576.1"/>
    <property type="molecule type" value="Genomic_DNA"/>
</dbReference>
<dbReference type="EMBL" id="Z71623">
    <property type="protein sequence ID" value="CAA96285.1"/>
    <property type="molecule type" value="Genomic_DNA"/>
</dbReference>
<dbReference type="EMBL" id="BK006947">
    <property type="protein sequence ID" value="DAA10549.1"/>
    <property type="molecule type" value="Genomic_DNA"/>
</dbReference>
<dbReference type="PIR" id="S45131">
    <property type="entry name" value="S45131"/>
</dbReference>
<dbReference type="RefSeq" id="NP_014405.1">
    <property type="nucleotide sequence ID" value="NM_001183185.1"/>
</dbReference>
<dbReference type="BioGRID" id="35833">
    <property type="interactions" value="146"/>
</dbReference>
<dbReference type="DIP" id="DIP-6403N"/>
<dbReference type="FunCoup" id="P40345">
    <property type="interactions" value="303"/>
</dbReference>
<dbReference type="IntAct" id="P40345">
    <property type="interactions" value="5"/>
</dbReference>
<dbReference type="STRING" id="4932.YNR008W"/>
<dbReference type="SwissLipids" id="SLP:000000059"/>
<dbReference type="ESTHER" id="yeast-pdat">
    <property type="family name" value="PC-sterol_acyltransferase"/>
</dbReference>
<dbReference type="GlyCosmos" id="P40345">
    <property type="glycosylation" value="4 sites, No reported glycans"/>
</dbReference>
<dbReference type="GlyGen" id="P40345">
    <property type="glycosylation" value="4 sites"/>
</dbReference>
<dbReference type="iPTMnet" id="P40345"/>
<dbReference type="PaxDb" id="4932-YNR008W"/>
<dbReference type="PeptideAtlas" id="P40345"/>
<dbReference type="EnsemblFungi" id="YNR008W_mRNA">
    <property type="protein sequence ID" value="YNR008W"/>
    <property type="gene ID" value="YNR008W"/>
</dbReference>
<dbReference type="GeneID" id="855742"/>
<dbReference type="KEGG" id="sce:YNR008W"/>
<dbReference type="AGR" id="SGD:S000005291"/>
<dbReference type="SGD" id="S000005291">
    <property type="gene designation" value="LRO1"/>
</dbReference>
<dbReference type="VEuPathDB" id="FungiDB:YNR008W"/>
<dbReference type="eggNOG" id="KOG2369">
    <property type="taxonomic scope" value="Eukaryota"/>
</dbReference>
<dbReference type="HOGENOM" id="CLU_016065_1_0_1"/>
<dbReference type="InParanoid" id="P40345"/>
<dbReference type="OMA" id="FYFLKWV"/>
<dbReference type="OrthoDB" id="190846at2759"/>
<dbReference type="BioCyc" id="YEAST:YNR008W-MONOMER"/>
<dbReference type="BRENDA" id="2.3.1.158">
    <property type="organism ID" value="984"/>
</dbReference>
<dbReference type="BioGRID-ORCS" id="855742">
    <property type="hits" value="1 hit in 10 CRISPR screens"/>
</dbReference>
<dbReference type="PRO" id="PR:P40345"/>
<dbReference type="Proteomes" id="UP000002311">
    <property type="component" value="Chromosome XIV"/>
</dbReference>
<dbReference type="RNAct" id="P40345">
    <property type="molecule type" value="protein"/>
</dbReference>
<dbReference type="GO" id="GO:0005737">
    <property type="term" value="C:cytoplasm"/>
    <property type="evidence" value="ECO:0000318"/>
    <property type="project" value="GO_Central"/>
</dbReference>
<dbReference type="GO" id="GO:0005783">
    <property type="term" value="C:endoplasmic reticulum"/>
    <property type="evidence" value="ECO:0007005"/>
    <property type="project" value="SGD"/>
</dbReference>
<dbReference type="GO" id="GO:0005789">
    <property type="term" value="C:endoplasmic reticulum membrane"/>
    <property type="evidence" value="ECO:0007669"/>
    <property type="project" value="UniProtKB-SubCell"/>
</dbReference>
<dbReference type="GO" id="GO:0005811">
    <property type="term" value="C:lipid droplet"/>
    <property type="evidence" value="ECO:0000314"/>
    <property type="project" value="SGD"/>
</dbReference>
<dbReference type="GO" id="GO:0005637">
    <property type="term" value="C:nuclear inner membrane"/>
    <property type="evidence" value="ECO:0000314"/>
    <property type="project" value="SGD"/>
</dbReference>
<dbReference type="GO" id="GO:0097038">
    <property type="term" value="C:perinuclear endoplasmic reticulum"/>
    <property type="evidence" value="ECO:0000314"/>
    <property type="project" value="SGD"/>
</dbReference>
<dbReference type="GO" id="GO:0008374">
    <property type="term" value="F:O-acyltransferase activity"/>
    <property type="evidence" value="ECO:0007669"/>
    <property type="project" value="InterPro"/>
</dbReference>
<dbReference type="GO" id="GO:0046027">
    <property type="term" value="F:phospholipid:diacylglycerol acyltransferase activity"/>
    <property type="evidence" value="ECO:0000314"/>
    <property type="project" value="SGD"/>
</dbReference>
<dbReference type="GO" id="GO:0006672">
    <property type="term" value="P:ceramide metabolic process"/>
    <property type="evidence" value="ECO:0000314"/>
    <property type="project" value="SGD"/>
</dbReference>
<dbReference type="GO" id="GO:0019915">
    <property type="term" value="P:lipid storage"/>
    <property type="evidence" value="ECO:0000314"/>
    <property type="project" value="SGD"/>
</dbReference>
<dbReference type="GO" id="GO:0055091">
    <property type="term" value="P:phospholipid homeostasis"/>
    <property type="evidence" value="ECO:0000314"/>
    <property type="project" value="SGD"/>
</dbReference>
<dbReference type="GO" id="GO:0019432">
    <property type="term" value="P:triglyceride biosynthetic process"/>
    <property type="evidence" value="ECO:0000314"/>
    <property type="project" value="SGD"/>
</dbReference>
<dbReference type="FunFam" id="3.40.50.1820:FF:000160">
    <property type="entry name" value="Phospholipid:diacylglycerol acyltransferase 1"/>
    <property type="match status" value="1"/>
</dbReference>
<dbReference type="Gene3D" id="3.40.50.1820">
    <property type="entry name" value="alpha/beta hydrolase"/>
    <property type="match status" value="1"/>
</dbReference>
<dbReference type="InterPro" id="IPR029058">
    <property type="entry name" value="AB_hydrolase_fold"/>
</dbReference>
<dbReference type="InterPro" id="IPR003386">
    <property type="entry name" value="LACT/PDAT_acylTrfase"/>
</dbReference>
<dbReference type="PANTHER" id="PTHR11440">
    <property type="entry name" value="LECITHIN-CHOLESTEROL ACYLTRANSFERASE-RELATED"/>
    <property type="match status" value="1"/>
</dbReference>
<dbReference type="Pfam" id="PF02450">
    <property type="entry name" value="LCAT"/>
    <property type="match status" value="1"/>
</dbReference>
<dbReference type="SUPFAM" id="SSF53474">
    <property type="entry name" value="alpha/beta-Hydrolases"/>
    <property type="match status" value="1"/>
</dbReference>
<proteinExistence type="evidence at protein level"/>